<protein>
    <recommendedName>
        <fullName evidence="1">Phosphopentomutase</fullName>
        <ecNumber evidence="1">5.4.2.7</ecNumber>
    </recommendedName>
    <alternativeName>
        <fullName evidence="1">Phosphodeoxyribomutase</fullName>
    </alternativeName>
</protein>
<reference key="1">
    <citation type="journal article" date="2005" name="Nucleic Acids Res.">
        <title>Genomic blueprint of Hahella chejuensis, a marine microbe producing an algicidal agent.</title>
        <authorList>
            <person name="Jeong H."/>
            <person name="Yim J.H."/>
            <person name="Lee C."/>
            <person name="Choi S.-H."/>
            <person name="Park Y.K."/>
            <person name="Yoon S.H."/>
            <person name="Hur C.-G."/>
            <person name="Kang H.-Y."/>
            <person name="Kim D."/>
            <person name="Lee H.H."/>
            <person name="Park K.H."/>
            <person name="Park S.-H."/>
            <person name="Park H.-S."/>
            <person name="Lee H.K."/>
            <person name="Oh T.K."/>
            <person name="Kim J.F."/>
        </authorList>
    </citation>
    <scope>NUCLEOTIDE SEQUENCE [LARGE SCALE GENOMIC DNA]</scope>
    <source>
        <strain>KCTC 2396</strain>
    </source>
</reference>
<comment type="function">
    <text evidence="1">Isomerase that catalyzes the conversion of deoxy-ribose 1-phosphate (dRib-1-P) and ribose 1-phosphate (Rib-1-P) to deoxy-ribose 5-phosphate (dRib-5-P) and ribose 5-phosphate (Rib-5-P), respectively.</text>
</comment>
<comment type="catalytic activity">
    <reaction evidence="1">
        <text>2-deoxy-alpha-D-ribose 1-phosphate = 2-deoxy-D-ribose 5-phosphate</text>
        <dbReference type="Rhea" id="RHEA:27658"/>
        <dbReference type="ChEBI" id="CHEBI:57259"/>
        <dbReference type="ChEBI" id="CHEBI:62877"/>
        <dbReference type="EC" id="5.4.2.7"/>
    </reaction>
</comment>
<comment type="catalytic activity">
    <reaction evidence="1">
        <text>alpha-D-ribose 1-phosphate = D-ribose 5-phosphate</text>
        <dbReference type="Rhea" id="RHEA:18793"/>
        <dbReference type="ChEBI" id="CHEBI:57720"/>
        <dbReference type="ChEBI" id="CHEBI:78346"/>
        <dbReference type="EC" id="5.4.2.7"/>
    </reaction>
</comment>
<comment type="cofactor">
    <cofactor evidence="1">
        <name>Mn(2+)</name>
        <dbReference type="ChEBI" id="CHEBI:29035"/>
    </cofactor>
    <text evidence="1">Binds 2 manganese ions.</text>
</comment>
<comment type="pathway">
    <text evidence="1">Carbohydrate degradation; 2-deoxy-D-ribose 1-phosphate degradation; D-glyceraldehyde 3-phosphate and acetaldehyde from 2-deoxy-alpha-D-ribose 1-phosphate: step 1/2.</text>
</comment>
<comment type="subcellular location">
    <subcellularLocation>
        <location evidence="1">Cytoplasm</location>
    </subcellularLocation>
</comment>
<comment type="similarity">
    <text evidence="1">Belongs to the phosphopentomutase family.</text>
</comment>
<keyword id="KW-0963">Cytoplasm</keyword>
<keyword id="KW-0413">Isomerase</keyword>
<keyword id="KW-0464">Manganese</keyword>
<keyword id="KW-0479">Metal-binding</keyword>
<keyword id="KW-1185">Reference proteome</keyword>
<organism>
    <name type="scientific">Hahella chejuensis (strain KCTC 2396)</name>
    <dbReference type="NCBI Taxonomy" id="349521"/>
    <lineage>
        <taxon>Bacteria</taxon>
        <taxon>Pseudomonadati</taxon>
        <taxon>Pseudomonadota</taxon>
        <taxon>Gammaproteobacteria</taxon>
        <taxon>Oceanospirillales</taxon>
        <taxon>Hahellaceae</taxon>
        <taxon>Hahella</taxon>
    </lineage>
</organism>
<accession>Q2SHN3</accession>
<feature type="chain" id="PRO_0000258287" description="Phosphopentomutase">
    <location>
        <begin position="1"/>
        <end position="414"/>
    </location>
</feature>
<feature type="binding site" evidence="1">
    <location>
        <position position="10"/>
    </location>
    <ligand>
        <name>Mn(2+)</name>
        <dbReference type="ChEBI" id="CHEBI:29035"/>
        <label>1</label>
    </ligand>
</feature>
<feature type="binding site" evidence="1">
    <location>
        <position position="309"/>
    </location>
    <ligand>
        <name>Mn(2+)</name>
        <dbReference type="ChEBI" id="CHEBI:29035"/>
        <label>2</label>
    </ligand>
</feature>
<feature type="binding site" evidence="1">
    <location>
        <position position="314"/>
    </location>
    <ligand>
        <name>Mn(2+)</name>
        <dbReference type="ChEBI" id="CHEBI:29035"/>
        <label>2</label>
    </ligand>
</feature>
<feature type="binding site" evidence="1">
    <location>
        <position position="350"/>
    </location>
    <ligand>
        <name>Mn(2+)</name>
        <dbReference type="ChEBI" id="CHEBI:29035"/>
        <label>1</label>
    </ligand>
</feature>
<feature type="binding site" evidence="1">
    <location>
        <position position="351"/>
    </location>
    <ligand>
        <name>Mn(2+)</name>
        <dbReference type="ChEBI" id="CHEBI:29035"/>
        <label>1</label>
    </ligand>
</feature>
<feature type="binding site" evidence="1">
    <location>
        <position position="362"/>
    </location>
    <ligand>
        <name>Mn(2+)</name>
        <dbReference type="ChEBI" id="CHEBI:29035"/>
        <label>2</label>
    </ligand>
</feature>
<sequence>MSRAILIVLDSFGIGATADAQRFGDAGANTLLHIAEACAAGACDSQGRTGPLRLPNLNRLGLGRAGEASCGAAAPGLEQAPEIIGTYGFAEELSSGKDTPSGHWEIAGVPVLFDWGYFTDKQQSFPPELLDAIIKEARLPGVLGNVHASGTQIIKDLGMEHRATGKPIFYTSADSVVQIACHEETFGLQRLYELCQITRKHIDPYNIARVIARPFVGASPEGFRRTGARRDFATPPHKPTLLDKLNNHGKQVIAIGKISDIYAGKGVSRSVKADGLGALVEATLTVMNETDEAAAKQDTLIFTNLVDFDMLYGHRRDVTGYAKALEDFDAMLPDLLGAMMDDDLLILTADHGCDPTWPGSDHTREHIPILMYGKRAPHGFIGARKTFADIGQTLAEYFQLDRLDFGESFLVADK</sequence>
<dbReference type="EC" id="5.4.2.7" evidence="1"/>
<dbReference type="EMBL" id="CP000155">
    <property type="protein sequence ID" value="ABC29841.1"/>
    <property type="molecule type" value="Genomic_DNA"/>
</dbReference>
<dbReference type="RefSeq" id="WP_011396910.1">
    <property type="nucleotide sequence ID" value="NC_007645.1"/>
</dbReference>
<dbReference type="SMR" id="Q2SHN3"/>
<dbReference type="STRING" id="349521.HCH_03075"/>
<dbReference type="KEGG" id="hch:HCH_03075"/>
<dbReference type="eggNOG" id="COG1015">
    <property type="taxonomic scope" value="Bacteria"/>
</dbReference>
<dbReference type="HOGENOM" id="CLU_053861_0_0_6"/>
<dbReference type="OrthoDB" id="9769930at2"/>
<dbReference type="UniPathway" id="UPA00002">
    <property type="reaction ID" value="UER00467"/>
</dbReference>
<dbReference type="Proteomes" id="UP000000238">
    <property type="component" value="Chromosome"/>
</dbReference>
<dbReference type="GO" id="GO:0005829">
    <property type="term" value="C:cytosol"/>
    <property type="evidence" value="ECO:0007669"/>
    <property type="project" value="TreeGrafter"/>
</dbReference>
<dbReference type="GO" id="GO:0000287">
    <property type="term" value="F:magnesium ion binding"/>
    <property type="evidence" value="ECO:0007669"/>
    <property type="project" value="InterPro"/>
</dbReference>
<dbReference type="GO" id="GO:0030145">
    <property type="term" value="F:manganese ion binding"/>
    <property type="evidence" value="ECO:0007669"/>
    <property type="project" value="UniProtKB-UniRule"/>
</dbReference>
<dbReference type="GO" id="GO:0008973">
    <property type="term" value="F:phosphopentomutase activity"/>
    <property type="evidence" value="ECO:0007669"/>
    <property type="project" value="UniProtKB-UniRule"/>
</dbReference>
<dbReference type="GO" id="GO:0006018">
    <property type="term" value="P:2-deoxyribose 1-phosphate catabolic process"/>
    <property type="evidence" value="ECO:0007669"/>
    <property type="project" value="UniProtKB-UniRule"/>
</dbReference>
<dbReference type="GO" id="GO:0006015">
    <property type="term" value="P:5-phosphoribose 1-diphosphate biosynthetic process"/>
    <property type="evidence" value="ECO:0007669"/>
    <property type="project" value="UniProtKB-UniPathway"/>
</dbReference>
<dbReference type="GO" id="GO:0043094">
    <property type="term" value="P:metabolic compound salvage"/>
    <property type="evidence" value="ECO:0007669"/>
    <property type="project" value="InterPro"/>
</dbReference>
<dbReference type="GO" id="GO:0009117">
    <property type="term" value="P:nucleotide metabolic process"/>
    <property type="evidence" value="ECO:0007669"/>
    <property type="project" value="InterPro"/>
</dbReference>
<dbReference type="CDD" id="cd16009">
    <property type="entry name" value="PPM"/>
    <property type="match status" value="1"/>
</dbReference>
<dbReference type="FunFam" id="3.30.70.1250:FF:000001">
    <property type="entry name" value="Phosphopentomutase"/>
    <property type="match status" value="1"/>
</dbReference>
<dbReference type="Gene3D" id="3.40.720.10">
    <property type="entry name" value="Alkaline Phosphatase, subunit A"/>
    <property type="match status" value="1"/>
</dbReference>
<dbReference type="Gene3D" id="3.30.70.1250">
    <property type="entry name" value="Phosphopentomutase"/>
    <property type="match status" value="1"/>
</dbReference>
<dbReference type="HAMAP" id="MF_00740">
    <property type="entry name" value="Phosphopentomut"/>
    <property type="match status" value="1"/>
</dbReference>
<dbReference type="InterPro" id="IPR017850">
    <property type="entry name" value="Alkaline_phosphatase_core_sf"/>
</dbReference>
<dbReference type="InterPro" id="IPR010045">
    <property type="entry name" value="DeoB"/>
</dbReference>
<dbReference type="InterPro" id="IPR006124">
    <property type="entry name" value="Metalloenzyme"/>
</dbReference>
<dbReference type="InterPro" id="IPR024052">
    <property type="entry name" value="Phosphopentomutase_DeoB_cap_sf"/>
</dbReference>
<dbReference type="NCBIfam" id="TIGR01696">
    <property type="entry name" value="deoB"/>
    <property type="match status" value="1"/>
</dbReference>
<dbReference type="NCBIfam" id="NF003766">
    <property type="entry name" value="PRK05362.1"/>
    <property type="match status" value="1"/>
</dbReference>
<dbReference type="PANTHER" id="PTHR21110">
    <property type="entry name" value="PHOSPHOPENTOMUTASE"/>
    <property type="match status" value="1"/>
</dbReference>
<dbReference type="PANTHER" id="PTHR21110:SF0">
    <property type="entry name" value="PHOSPHOPENTOMUTASE"/>
    <property type="match status" value="1"/>
</dbReference>
<dbReference type="Pfam" id="PF01676">
    <property type="entry name" value="Metalloenzyme"/>
    <property type="match status" value="1"/>
</dbReference>
<dbReference type="PIRSF" id="PIRSF001491">
    <property type="entry name" value="Ppentomutase"/>
    <property type="match status" value="1"/>
</dbReference>
<dbReference type="SUPFAM" id="SSF53649">
    <property type="entry name" value="Alkaline phosphatase-like"/>
    <property type="match status" value="1"/>
</dbReference>
<dbReference type="SUPFAM" id="SSF143856">
    <property type="entry name" value="DeoB insert domain-like"/>
    <property type="match status" value="1"/>
</dbReference>
<evidence type="ECO:0000255" key="1">
    <source>
        <dbReference type="HAMAP-Rule" id="MF_00740"/>
    </source>
</evidence>
<gene>
    <name evidence="1" type="primary">deoB</name>
    <name type="ordered locus">HCH_03075</name>
</gene>
<proteinExistence type="inferred from homology"/>
<name>DEOB_HAHCH</name>